<name>3604L_ASFK5</name>
<accession>P0C9M9</accession>
<feature type="chain" id="PRO_0000373255" description="Protein MGF 360-4L">
    <location>
        <begin position="1"/>
        <end position="387"/>
    </location>
</feature>
<protein>
    <recommendedName>
        <fullName>Protein MGF 360-4L</fullName>
    </recommendedName>
</protein>
<sequence>MNSLQVLTKKVLIENKAFSNYHEDDSFILQQLGLWWENGPIGFCKQCKMVTGGSMLCSDVDSYELDRALVKAVKENQTDLIKLFVLWGAEINFGIVCAKTKKMKDLCIQLGADPKFLDEGLYNMFVYLVKQKKVLLAIDIYYDNILILDSFDSHDFHMLIDFMYNRFILNLDEKEEMTRNTLVLKFWYKFAIDFNLIKPIRYLSKKFPHLDDWRLKTAIYLGNVDEIHHAYFQENIRLDPNHMMSFACIHPWNKLGIYYCFALGADIDNALDILLRFDETNKEINRETGRGISLYIEWGYLSNVYFCIGLGANPYIKKIQDTIKQKNSNIMILLFSRKKRILSPHSVLQNKILDPTDVRKMILTHENTENFYPFSELAVRLIQQANI</sequence>
<dbReference type="EMBL" id="AY261360">
    <property type="status" value="NOT_ANNOTATED_CDS"/>
    <property type="molecule type" value="Genomic_DNA"/>
</dbReference>
<dbReference type="SMR" id="P0C9M9"/>
<dbReference type="Proteomes" id="UP000000861">
    <property type="component" value="Segment"/>
</dbReference>
<dbReference type="GO" id="GO:0042330">
    <property type="term" value="P:taxis"/>
    <property type="evidence" value="ECO:0007669"/>
    <property type="project" value="InterPro"/>
</dbReference>
<dbReference type="InterPro" id="IPR002595">
    <property type="entry name" value="ASFV_MGF360"/>
</dbReference>
<dbReference type="Pfam" id="PF01671">
    <property type="entry name" value="ASFV_360"/>
    <property type="match status" value="1"/>
</dbReference>
<proteinExistence type="inferred from homology"/>
<gene>
    <name type="ordered locus">Ken-023</name>
</gene>
<organismHost>
    <name type="scientific">Ornithodoros</name>
    <name type="common">relapsing fever ticks</name>
    <dbReference type="NCBI Taxonomy" id="6937"/>
</organismHost>
<organismHost>
    <name type="scientific">Phacochoerus aethiopicus</name>
    <name type="common">Warthog</name>
    <dbReference type="NCBI Taxonomy" id="85517"/>
</organismHost>
<organismHost>
    <name type="scientific">Phacochoerus africanus</name>
    <name type="common">Warthog</name>
    <dbReference type="NCBI Taxonomy" id="41426"/>
</organismHost>
<organismHost>
    <name type="scientific">Potamochoerus larvatus</name>
    <name type="common">Bushpig</name>
    <dbReference type="NCBI Taxonomy" id="273792"/>
</organismHost>
<organismHost>
    <name type="scientific">Sus scrofa</name>
    <name type="common">Pig</name>
    <dbReference type="NCBI Taxonomy" id="9823"/>
</organismHost>
<comment type="function">
    <text evidence="1">Plays a role in virus cell tropism, and may be required for efficient virus replication in macrophages.</text>
</comment>
<comment type="similarity">
    <text evidence="2">Belongs to the asfivirus MGF 360 family.</text>
</comment>
<evidence type="ECO:0000250" key="1"/>
<evidence type="ECO:0000305" key="2"/>
<reference key="1">
    <citation type="submission" date="2003-03" db="EMBL/GenBank/DDBJ databases">
        <title>African swine fever virus genomes.</title>
        <authorList>
            <person name="Kutish G.F."/>
            <person name="Rock D.L."/>
        </authorList>
    </citation>
    <scope>NUCLEOTIDE SEQUENCE [LARGE SCALE GENOMIC DNA]</scope>
</reference>
<organism>
    <name type="scientific">African swine fever virus (isolate Pig/Kenya/KEN-50/1950)</name>
    <name type="common">ASFV</name>
    <dbReference type="NCBI Taxonomy" id="561445"/>
    <lineage>
        <taxon>Viruses</taxon>
        <taxon>Varidnaviria</taxon>
        <taxon>Bamfordvirae</taxon>
        <taxon>Nucleocytoviricota</taxon>
        <taxon>Pokkesviricetes</taxon>
        <taxon>Asfuvirales</taxon>
        <taxon>Asfarviridae</taxon>
        <taxon>Asfivirus</taxon>
        <taxon>African swine fever virus</taxon>
    </lineage>
</organism>